<reference key="1">
    <citation type="submission" date="2008-12" db="EMBL/GenBank/DDBJ databases">
        <title>Complete sequence of chromosome of Methylobacterium chloromethanicum CM4.</title>
        <authorList>
            <consortium name="US DOE Joint Genome Institute"/>
            <person name="Lucas S."/>
            <person name="Copeland A."/>
            <person name="Lapidus A."/>
            <person name="Glavina del Rio T."/>
            <person name="Dalin E."/>
            <person name="Tice H."/>
            <person name="Bruce D."/>
            <person name="Goodwin L."/>
            <person name="Pitluck S."/>
            <person name="Chertkov O."/>
            <person name="Brettin T."/>
            <person name="Detter J.C."/>
            <person name="Han C."/>
            <person name="Larimer F."/>
            <person name="Land M."/>
            <person name="Hauser L."/>
            <person name="Kyrpides N."/>
            <person name="Mikhailova N."/>
            <person name="Marx C."/>
            <person name="Richardson P."/>
        </authorList>
    </citation>
    <scope>NUCLEOTIDE SEQUENCE [LARGE SCALE GENOMIC DNA]</scope>
    <source>
        <strain>CM4 / NCIMB 13688</strain>
    </source>
</reference>
<sequence>MSVLTTRAPAKINLTLHILGRRPGDGYHALESLVAFADVADTLELVPGPDLTLDISGPTAGPAGPLDDNLVLRAARHLAAGVDGLRLGAFRLHKQLPVAAGIGGGSSDAAAALRLLAELNGLALDHPAVIAAARATGADVPVCLDPRARMMRGAGEEIGPVLGLASLPAVLVNPGVPVSTAPVFKALGLAVGQRLDGAELPVVGASLNADAVLAVITPARNDLEAPALTVAPVIGEALALLRAQAGCRLARMSGSGATVFAIFSDDGAAETAAAAIRTAEPGWWVEPTRLA</sequence>
<accession>B7KUL9</accession>
<keyword id="KW-0067">ATP-binding</keyword>
<keyword id="KW-0414">Isoprene biosynthesis</keyword>
<keyword id="KW-0418">Kinase</keyword>
<keyword id="KW-0547">Nucleotide-binding</keyword>
<keyword id="KW-0808">Transferase</keyword>
<dbReference type="EC" id="2.7.1.148" evidence="1"/>
<dbReference type="EMBL" id="CP001298">
    <property type="protein sequence ID" value="ACK84248.1"/>
    <property type="molecule type" value="Genomic_DNA"/>
</dbReference>
<dbReference type="RefSeq" id="WP_015951552.1">
    <property type="nucleotide sequence ID" value="NC_011757.1"/>
</dbReference>
<dbReference type="SMR" id="B7KUL9"/>
<dbReference type="KEGG" id="mch:Mchl_3428"/>
<dbReference type="HOGENOM" id="CLU_053057_1_0_5"/>
<dbReference type="UniPathway" id="UPA00056">
    <property type="reaction ID" value="UER00094"/>
</dbReference>
<dbReference type="Proteomes" id="UP000002385">
    <property type="component" value="Chromosome"/>
</dbReference>
<dbReference type="GO" id="GO:0050515">
    <property type="term" value="F:4-(cytidine 5'-diphospho)-2-C-methyl-D-erythritol kinase activity"/>
    <property type="evidence" value="ECO:0007669"/>
    <property type="project" value="UniProtKB-UniRule"/>
</dbReference>
<dbReference type="GO" id="GO:0005524">
    <property type="term" value="F:ATP binding"/>
    <property type="evidence" value="ECO:0007669"/>
    <property type="project" value="UniProtKB-UniRule"/>
</dbReference>
<dbReference type="GO" id="GO:0019288">
    <property type="term" value="P:isopentenyl diphosphate biosynthetic process, methylerythritol 4-phosphate pathway"/>
    <property type="evidence" value="ECO:0007669"/>
    <property type="project" value="UniProtKB-UniRule"/>
</dbReference>
<dbReference type="GO" id="GO:0016114">
    <property type="term" value="P:terpenoid biosynthetic process"/>
    <property type="evidence" value="ECO:0007669"/>
    <property type="project" value="InterPro"/>
</dbReference>
<dbReference type="Gene3D" id="3.30.230.10">
    <property type="match status" value="1"/>
</dbReference>
<dbReference type="Gene3D" id="3.30.70.890">
    <property type="entry name" value="GHMP kinase, C-terminal domain"/>
    <property type="match status" value="1"/>
</dbReference>
<dbReference type="HAMAP" id="MF_00061">
    <property type="entry name" value="IspE"/>
    <property type="match status" value="1"/>
</dbReference>
<dbReference type="InterPro" id="IPR013750">
    <property type="entry name" value="GHMP_kinase_C_dom"/>
</dbReference>
<dbReference type="InterPro" id="IPR036554">
    <property type="entry name" value="GHMP_kinase_C_sf"/>
</dbReference>
<dbReference type="InterPro" id="IPR006204">
    <property type="entry name" value="GHMP_kinase_N_dom"/>
</dbReference>
<dbReference type="InterPro" id="IPR004424">
    <property type="entry name" value="IspE"/>
</dbReference>
<dbReference type="InterPro" id="IPR020568">
    <property type="entry name" value="Ribosomal_Su5_D2-typ_SF"/>
</dbReference>
<dbReference type="InterPro" id="IPR014721">
    <property type="entry name" value="Ribsml_uS5_D2-typ_fold_subgr"/>
</dbReference>
<dbReference type="NCBIfam" id="NF011202">
    <property type="entry name" value="PRK14608.1"/>
    <property type="match status" value="1"/>
</dbReference>
<dbReference type="PANTHER" id="PTHR43527">
    <property type="entry name" value="4-DIPHOSPHOCYTIDYL-2-C-METHYL-D-ERYTHRITOL KINASE, CHLOROPLASTIC"/>
    <property type="match status" value="1"/>
</dbReference>
<dbReference type="PANTHER" id="PTHR43527:SF2">
    <property type="entry name" value="4-DIPHOSPHOCYTIDYL-2-C-METHYL-D-ERYTHRITOL KINASE, CHLOROPLASTIC"/>
    <property type="match status" value="1"/>
</dbReference>
<dbReference type="Pfam" id="PF08544">
    <property type="entry name" value="GHMP_kinases_C"/>
    <property type="match status" value="1"/>
</dbReference>
<dbReference type="Pfam" id="PF00288">
    <property type="entry name" value="GHMP_kinases_N"/>
    <property type="match status" value="1"/>
</dbReference>
<dbReference type="PIRSF" id="PIRSF010376">
    <property type="entry name" value="IspE"/>
    <property type="match status" value="1"/>
</dbReference>
<dbReference type="SUPFAM" id="SSF55060">
    <property type="entry name" value="GHMP Kinase, C-terminal domain"/>
    <property type="match status" value="1"/>
</dbReference>
<dbReference type="SUPFAM" id="SSF54211">
    <property type="entry name" value="Ribosomal protein S5 domain 2-like"/>
    <property type="match status" value="1"/>
</dbReference>
<protein>
    <recommendedName>
        <fullName evidence="1">4-diphosphocytidyl-2-C-methyl-D-erythritol kinase</fullName>
        <shortName evidence="1">CMK</shortName>
        <ecNumber evidence="1">2.7.1.148</ecNumber>
    </recommendedName>
    <alternativeName>
        <fullName evidence="1">4-(cytidine-5'-diphospho)-2-C-methyl-D-erythritol kinase</fullName>
    </alternativeName>
</protein>
<evidence type="ECO:0000255" key="1">
    <source>
        <dbReference type="HAMAP-Rule" id="MF_00061"/>
    </source>
</evidence>
<name>ISPE_METC4</name>
<comment type="function">
    <text evidence="1">Catalyzes the phosphorylation of the position 2 hydroxy group of 4-diphosphocytidyl-2C-methyl-D-erythritol.</text>
</comment>
<comment type="catalytic activity">
    <reaction evidence="1">
        <text>4-CDP-2-C-methyl-D-erythritol + ATP = 4-CDP-2-C-methyl-D-erythritol 2-phosphate + ADP + H(+)</text>
        <dbReference type="Rhea" id="RHEA:18437"/>
        <dbReference type="ChEBI" id="CHEBI:15378"/>
        <dbReference type="ChEBI" id="CHEBI:30616"/>
        <dbReference type="ChEBI" id="CHEBI:57823"/>
        <dbReference type="ChEBI" id="CHEBI:57919"/>
        <dbReference type="ChEBI" id="CHEBI:456216"/>
        <dbReference type="EC" id="2.7.1.148"/>
    </reaction>
</comment>
<comment type="pathway">
    <text evidence="1">Isoprenoid biosynthesis; isopentenyl diphosphate biosynthesis via DXP pathway; isopentenyl diphosphate from 1-deoxy-D-xylulose 5-phosphate: step 3/6.</text>
</comment>
<comment type="similarity">
    <text evidence="1">Belongs to the GHMP kinase family. IspE subfamily.</text>
</comment>
<gene>
    <name evidence="1" type="primary">ispE</name>
    <name type="ordered locus">Mchl_3428</name>
</gene>
<organism>
    <name type="scientific">Methylorubrum extorquens (strain CM4 / NCIMB 13688)</name>
    <name type="common">Methylobacterium extorquens</name>
    <dbReference type="NCBI Taxonomy" id="440085"/>
    <lineage>
        <taxon>Bacteria</taxon>
        <taxon>Pseudomonadati</taxon>
        <taxon>Pseudomonadota</taxon>
        <taxon>Alphaproteobacteria</taxon>
        <taxon>Hyphomicrobiales</taxon>
        <taxon>Methylobacteriaceae</taxon>
        <taxon>Methylorubrum</taxon>
    </lineage>
</organism>
<feature type="chain" id="PRO_1000190692" description="4-diphosphocytidyl-2-C-methyl-D-erythritol kinase">
    <location>
        <begin position="1"/>
        <end position="291"/>
    </location>
</feature>
<feature type="active site" evidence="1">
    <location>
        <position position="11"/>
    </location>
</feature>
<feature type="active site" evidence="1">
    <location>
        <position position="139"/>
    </location>
</feature>
<feature type="binding site" evidence="1">
    <location>
        <begin position="97"/>
        <end position="107"/>
    </location>
    <ligand>
        <name>ATP</name>
        <dbReference type="ChEBI" id="CHEBI:30616"/>
    </ligand>
</feature>
<proteinExistence type="inferred from homology"/>